<protein>
    <recommendedName>
        <fullName evidence="1">Phosphoglycerol transferase I</fullName>
        <ecNumber evidence="1">2.7.8.20</ecNumber>
    </recommendedName>
    <alternativeName>
        <fullName evidence="1">Phosphatidylglycerol--membrane-oligosaccharide glycerophosphotransferase</fullName>
    </alternativeName>
</protein>
<name>OPGB_ECOUT</name>
<gene>
    <name evidence="1" type="primary">mdoB</name>
    <name evidence="1" type="synonym">opgB</name>
    <name type="ordered locus">UTI89_C5065</name>
</gene>
<comment type="function">
    <text evidence="1">Transfers a phosphoglycerol residue from phosphatidylglycerol to the membrane-bound nascent glucan backbones.</text>
</comment>
<comment type="catalytic activity">
    <reaction evidence="1">
        <text>a phosphatidylglycerol + a membrane-derived-oligosaccharide D-glucose = a 1,2-diacyl-sn-glycerol + a membrane-derived-oligosaccharide 6-(glycerophospho)-D-glucose.</text>
        <dbReference type="EC" id="2.7.8.20"/>
    </reaction>
</comment>
<comment type="pathway">
    <text evidence="1">Glycan metabolism; osmoregulated periplasmic glucan (OPG) biosynthesis.</text>
</comment>
<comment type="subcellular location">
    <subcellularLocation>
        <location evidence="1">Cell inner membrane</location>
        <topology evidence="1">Multi-pass membrane protein</topology>
    </subcellularLocation>
</comment>
<comment type="similarity">
    <text evidence="1">Belongs to the OpgB family.</text>
</comment>
<proteinExistence type="inferred from homology"/>
<dbReference type="EC" id="2.7.8.20" evidence="1"/>
<dbReference type="EMBL" id="CP000243">
    <property type="protein sequence ID" value="ABE10468.1"/>
    <property type="molecule type" value="Genomic_DNA"/>
</dbReference>
<dbReference type="RefSeq" id="WP_001292631.1">
    <property type="nucleotide sequence ID" value="NZ_CP064825.1"/>
</dbReference>
<dbReference type="SMR" id="Q1R2E6"/>
<dbReference type="KEGG" id="eci:UTI89_C5065"/>
<dbReference type="HOGENOM" id="CLU_023986_1_0_6"/>
<dbReference type="UniPathway" id="UPA00637"/>
<dbReference type="Proteomes" id="UP000001952">
    <property type="component" value="Chromosome"/>
</dbReference>
<dbReference type="GO" id="GO:0005886">
    <property type="term" value="C:plasma membrane"/>
    <property type="evidence" value="ECO:0007669"/>
    <property type="project" value="UniProtKB-SubCell"/>
</dbReference>
<dbReference type="GO" id="GO:0008960">
    <property type="term" value="F:phosphatidylglycerol-membrane-oligosaccharide glycerophosphotransferase activity"/>
    <property type="evidence" value="ECO:0007669"/>
    <property type="project" value="UniProtKB-UniRule"/>
</dbReference>
<dbReference type="GO" id="GO:0009250">
    <property type="term" value="P:glucan biosynthetic process"/>
    <property type="evidence" value="ECO:0007669"/>
    <property type="project" value="UniProtKB-UniRule"/>
</dbReference>
<dbReference type="CDD" id="cd16015">
    <property type="entry name" value="LTA_synthase"/>
    <property type="match status" value="1"/>
</dbReference>
<dbReference type="FunFam" id="3.40.720.10:FF:000009">
    <property type="entry name" value="Phosphoglycerol transferase I"/>
    <property type="match status" value="1"/>
</dbReference>
<dbReference type="Gene3D" id="3.40.720.10">
    <property type="entry name" value="Alkaline Phosphatase, subunit A"/>
    <property type="match status" value="1"/>
</dbReference>
<dbReference type="HAMAP" id="MF_01070">
    <property type="entry name" value="MdoB_OpgB"/>
    <property type="match status" value="1"/>
</dbReference>
<dbReference type="InterPro" id="IPR017850">
    <property type="entry name" value="Alkaline_phosphatase_core_sf"/>
</dbReference>
<dbReference type="InterPro" id="IPR054288">
    <property type="entry name" value="DUF7024"/>
</dbReference>
<dbReference type="InterPro" id="IPR020881">
    <property type="entry name" value="OpgB"/>
</dbReference>
<dbReference type="InterPro" id="IPR050448">
    <property type="entry name" value="OpgB/LTA_synthase_biosynth"/>
</dbReference>
<dbReference type="InterPro" id="IPR000917">
    <property type="entry name" value="Sulfatase_N"/>
</dbReference>
<dbReference type="NCBIfam" id="NF003000">
    <property type="entry name" value="PRK03776.1"/>
    <property type="match status" value="1"/>
</dbReference>
<dbReference type="PANTHER" id="PTHR47371">
    <property type="entry name" value="LIPOTEICHOIC ACID SYNTHASE"/>
    <property type="match status" value="1"/>
</dbReference>
<dbReference type="PANTHER" id="PTHR47371:SF3">
    <property type="entry name" value="PHOSPHOGLYCEROL TRANSFERASE I"/>
    <property type="match status" value="1"/>
</dbReference>
<dbReference type="Pfam" id="PF22895">
    <property type="entry name" value="DUF7024"/>
    <property type="match status" value="1"/>
</dbReference>
<dbReference type="Pfam" id="PF00884">
    <property type="entry name" value="Sulfatase"/>
    <property type="match status" value="1"/>
</dbReference>
<dbReference type="SUPFAM" id="SSF53649">
    <property type="entry name" value="Alkaline phosphatase-like"/>
    <property type="match status" value="1"/>
</dbReference>
<sequence>MSELLSFALFLASVLIYAWKAGRNTWWFAATLTVLGLFVVLNITLFASDYFTGDGINDAVLYTLTNSLTGAGVSKYILPGIGIVLGLAAVFGALGWILRRRRHHPHHFGYSLLALLLALGSVDASPAFRQITELVKSQSRDGDPDFAAYYKEPSKTIPDPKLNLVYIYGESLERTYFDNEAFPDLTPELGALKNEGLDFSHTQQLPGTDYTIAGMVASQCGIPLFAPFEGNASASVSSFFPQNICLGDIMKNSGYQNYFVQGANLRFAGKDVFLKSHGFDHLYGSEELKSVVADPHYRNDWGFYDDTVLDEAWKKFEELSRSGQRFSLFTLTVDTHHPDGFISRTCNRKKYDFDGKPNQSFSAVSCSQENIATFINKIKASPWFKDTVIVVSSDHLAMNNTAWKYLNKQDRNNLFFVIRGDKPQQETLAVKRNTMDNGATVLDILGGDNYLGLGRSSLSGQSMSEIFLNIKEKTLAWKPDIIRLWKFPKEMKEFTIDQQKNMIAFSGSHFRLPLLLRVSDKRVEPLPESEYSAPLRFQLADFAPRDNFVWVDRCYKMAQLWAPELALSTDWCVSQGQLGGQQIVQHVDKAIWKGKTAFKDTVIDMARYKGNVDTLKIVDNDIRYKADSFIFNVAGAPEEVKQFSGISRPESWGRWSNAQLGDEVKIEYKHPLPKKFDLVITAKAYGNNASRPIPVRVGNEEQTLVLGNEVTTTTLHFDNPTDADTLVIVPPEPVSTNEGNILGHSPRKLGIGMVEIKVVEREG</sequence>
<organism>
    <name type="scientific">Escherichia coli (strain UTI89 / UPEC)</name>
    <dbReference type="NCBI Taxonomy" id="364106"/>
    <lineage>
        <taxon>Bacteria</taxon>
        <taxon>Pseudomonadati</taxon>
        <taxon>Pseudomonadota</taxon>
        <taxon>Gammaproteobacteria</taxon>
        <taxon>Enterobacterales</taxon>
        <taxon>Enterobacteriaceae</taxon>
        <taxon>Escherichia</taxon>
    </lineage>
</organism>
<keyword id="KW-0997">Cell inner membrane</keyword>
<keyword id="KW-1003">Cell membrane</keyword>
<keyword id="KW-0472">Membrane</keyword>
<keyword id="KW-0808">Transferase</keyword>
<keyword id="KW-0812">Transmembrane</keyword>
<keyword id="KW-1133">Transmembrane helix</keyword>
<feature type="chain" id="PRO_1000064575" description="Phosphoglycerol transferase I">
    <location>
        <begin position="1"/>
        <end position="763"/>
    </location>
</feature>
<feature type="transmembrane region" description="Helical" evidence="1">
    <location>
        <begin position="1"/>
        <end position="21"/>
    </location>
</feature>
<feature type="transmembrane region" description="Helical" evidence="1">
    <location>
        <begin position="26"/>
        <end position="46"/>
    </location>
</feature>
<feature type="transmembrane region" description="Helical" evidence="1">
    <location>
        <begin position="77"/>
        <end position="97"/>
    </location>
</feature>
<feature type="transmembrane region" description="Helical" evidence="1">
    <location>
        <begin position="108"/>
        <end position="128"/>
    </location>
</feature>
<evidence type="ECO:0000255" key="1">
    <source>
        <dbReference type="HAMAP-Rule" id="MF_01070"/>
    </source>
</evidence>
<accession>Q1R2E6</accession>
<reference key="1">
    <citation type="journal article" date="2006" name="Proc. Natl. Acad. Sci. U.S.A.">
        <title>Identification of genes subject to positive selection in uropathogenic strains of Escherichia coli: a comparative genomics approach.</title>
        <authorList>
            <person name="Chen S.L."/>
            <person name="Hung C.-S."/>
            <person name="Xu J."/>
            <person name="Reigstad C.S."/>
            <person name="Magrini V."/>
            <person name="Sabo A."/>
            <person name="Blasiar D."/>
            <person name="Bieri T."/>
            <person name="Meyer R.R."/>
            <person name="Ozersky P."/>
            <person name="Armstrong J.R."/>
            <person name="Fulton R.S."/>
            <person name="Latreille J.P."/>
            <person name="Spieth J."/>
            <person name="Hooton T.M."/>
            <person name="Mardis E.R."/>
            <person name="Hultgren S.J."/>
            <person name="Gordon J.I."/>
        </authorList>
    </citation>
    <scope>NUCLEOTIDE SEQUENCE [LARGE SCALE GENOMIC DNA]</scope>
    <source>
        <strain>UTI89 / UPEC</strain>
    </source>
</reference>